<sequence>MDQKRLTHLRQLEAESIHIIREVAAEFSNPVMLYSIGKDSSVMLHLARKAFYPGTLPFPLLHVDTGWKFREMYEFRDRTAKAYGCELLVHKNPEGVAMGINPFVHGSAKHTDIMKTEGLKQALNKYGFDAAFGGARRDEEKSRAKERIYSFRDRFHRWDPKNQRPELWHNYNGQINKGESIRVFPLSNWTEQDIWQYIWLENIDIVPLYLAAERPVLERDGMLMMIDDNRIDLQPGEVIKKRMVRFRTLGCWPLTGAVESNAQTLPEIIEEMLVSTTSERQGRVIDRDQAGSMELKKRQGYF</sequence>
<feature type="chain" id="PRO_1000057436" description="Sulfate adenylyltransferase subunit 2">
    <location>
        <begin position="1"/>
        <end position="302"/>
    </location>
</feature>
<evidence type="ECO:0000255" key="1">
    <source>
        <dbReference type="HAMAP-Rule" id="MF_00064"/>
    </source>
</evidence>
<protein>
    <recommendedName>
        <fullName evidence="1">Sulfate adenylyltransferase subunit 2</fullName>
        <ecNumber evidence="1">2.7.7.4</ecNumber>
    </recommendedName>
    <alternativeName>
        <fullName evidence="1">ATP-sulfurylase small subunit</fullName>
    </alternativeName>
    <alternativeName>
        <fullName evidence="1">Sulfate adenylate transferase</fullName>
        <shortName evidence="1">SAT</shortName>
    </alternativeName>
</protein>
<accession>A7ZQJ6</accession>
<keyword id="KW-0067">ATP-binding</keyword>
<keyword id="KW-0547">Nucleotide-binding</keyword>
<keyword id="KW-0548">Nucleotidyltransferase</keyword>
<keyword id="KW-1185">Reference proteome</keyword>
<keyword id="KW-0808">Transferase</keyword>
<reference key="1">
    <citation type="journal article" date="2008" name="J. Bacteriol.">
        <title>The pangenome structure of Escherichia coli: comparative genomic analysis of E. coli commensal and pathogenic isolates.</title>
        <authorList>
            <person name="Rasko D.A."/>
            <person name="Rosovitz M.J."/>
            <person name="Myers G.S.A."/>
            <person name="Mongodin E.F."/>
            <person name="Fricke W.F."/>
            <person name="Gajer P."/>
            <person name="Crabtree J."/>
            <person name="Sebaihia M."/>
            <person name="Thomson N.R."/>
            <person name="Chaudhuri R."/>
            <person name="Henderson I.R."/>
            <person name="Sperandio V."/>
            <person name="Ravel J."/>
        </authorList>
    </citation>
    <scope>NUCLEOTIDE SEQUENCE [LARGE SCALE GENOMIC DNA]</scope>
    <source>
        <strain>E24377A / ETEC</strain>
    </source>
</reference>
<organism>
    <name type="scientific">Escherichia coli O139:H28 (strain E24377A / ETEC)</name>
    <dbReference type="NCBI Taxonomy" id="331111"/>
    <lineage>
        <taxon>Bacteria</taxon>
        <taxon>Pseudomonadati</taxon>
        <taxon>Pseudomonadota</taxon>
        <taxon>Gammaproteobacteria</taxon>
        <taxon>Enterobacterales</taxon>
        <taxon>Enterobacteriaceae</taxon>
        <taxon>Escherichia</taxon>
    </lineage>
</organism>
<comment type="function">
    <text evidence="1">With CysN forms the ATP sulfurylase (ATPS) that catalyzes the adenylation of sulfate producing adenosine 5'-phosphosulfate (APS) and diphosphate, the first enzymatic step in sulfur assimilation pathway. APS synthesis involves the formation of a high-energy phosphoric-sulfuric acid anhydride bond driven by GTP hydrolysis by CysN coupled to ATP hydrolysis by CysD.</text>
</comment>
<comment type="catalytic activity">
    <reaction evidence="1">
        <text>sulfate + ATP + H(+) = adenosine 5'-phosphosulfate + diphosphate</text>
        <dbReference type="Rhea" id="RHEA:18133"/>
        <dbReference type="ChEBI" id="CHEBI:15378"/>
        <dbReference type="ChEBI" id="CHEBI:16189"/>
        <dbReference type="ChEBI" id="CHEBI:30616"/>
        <dbReference type="ChEBI" id="CHEBI:33019"/>
        <dbReference type="ChEBI" id="CHEBI:58243"/>
        <dbReference type="EC" id="2.7.7.4"/>
    </reaction>
</comment>
<comment type="pathway">
    <text evidence="1">Sulfur metabolism; hydrogen sulfide biosynthesis; sulfite from sulfate: step 1/3.</text>
</comment>
<comment type="subunit">
    <text evidence="1">Heterodimer composed of CysD, the smaller subunit, and CysN.</text>
</comment>
<comment type="similarity">
    <text evidence="1">Belongs to the PAPS reductase family. CysD subfamily.</text>
</comment>
<gene>
    <name evidence="1" type="primary">cysD</name>
    <name type="ordered locus">EcE24377A_3053</name>
</gene>
<dbReference type="EC" id="2.7.7.4" evidence="1"/>
<dbReference type="EMBL" id="CP000800">
    <property type="protein sequence ID" value="ABV19869.1"/>
    <property type="molecule type" value="Genomic_DNA"/>
</dbReference>
<dbReference type="RefSeq" id="WP_000372392.1">
    <property type="nucleotide sequence ID" value="NC_009801.1"/>
</dbReference>
<dbReference type="SMR" id="A7ZQJ6"/>
<dbReference type="GeneID" id="89517568"/>
<dbReference type="KEGG" id="ecw:EcE24377A_3053"/>
<dbReference type="HOGENOM" id="CLU_043026_0_0_6"/>
<dbReference type="UniPathway" id="UPA00140">
    <property type="reaction ID" value="UER00204"/>
</dbReference>
<dbReference type="Proteomes" id="UP000001122">
    <property type="component" value="Chromosome"/>
</dbReference>
<dbReference type="GO" id="GO:0005524">
    <property type="term" value="F:ATP binding"/>
    <property type="evidence" value="ECO:0007669"/>
    <property type="project" value="UniProtKB-KW"/>
</dbReference>
<dbReference type="GO" id="GO:0004781">
    <property type="term" value="F:sulfate adenylyltransferase (ATP) activity"/>
    <property type="evidence" value="ECO:0007669"/>
    <property type="project" value="UniProtKB-UniRule"/>
</dbReference>
<dbReference type="GO" id="GO:0070814">
    <property type="term" value="P:hydrogen sulfide biosynthetic process"/>
    <property type="evidence" value="ECO:0007669"/>
    <property type="project" value="UniProtKB-UniRule"/>
</dbReference>
<dbReference type="GO" id="GO:0000103">
    <property type="term" value="P:sulfate assimilation"/>
    <property type="evidence" value="ECO:0007669"/>
    <property type="project" value="UniProtKB-UniRule"/>
</dbReference>
<dbReference type="CDD" id="cd23946">
    <property type="entry name" value="Sulfate_adenylyltransferase_2"/>
    <property type="match status" value="1"/>
</dbReference>
<dbReference type="FunFam" id="3.40.50.620:FF:000002">
    <property type="entry name" value="Sulfate adenylyltransferase subunit 2"/>
    <property type="match status" value="1"/>
</dbReference>
<dbReference type="Gene3D" id="3.40.50.620">
    <property type="entry name" value="HUPs"/>
    <property type="match status" value="1"/>
</dbReference>
<dbReference type="HAMAP" id="MF_00064">
    <property type="entry name" value="Sulf_adenylyltr_sub2"/>
    <property type="match status" value="1"/>
</dbReference>
<dbReference type="InterPro" id="IPR002500">
    <property type="entry name" value="PAPS_reduct_dom"/>
</dbReference>
<dbReference type="InterPro" id="IPR014729">
    <property type="entry name" value="Rossmann-like_a/b/a_fold"/>
</dbReference>
<dbReference type="InterPro" id="IPR011784">
    <property type="entry name" value="SO4_adenylTrfase_ssu"/>
</dbReference>
<dbReference type="InterPro" id="IPR050128">
    <property type="entry name" value="Sulfate_adenylyltrnsfr_sub2"/>
</dbReference>
<dbReference type="NCBIfam" id="TIGR02039">
    <property type="entry name" value="CysD"/>
    <property type="match status" value="1"/>
</dbReference>
<dbReference type="NCBIfam" id="NF003587">
    <property type="entry name" value="PRK05253.1"/>
    <property type="match status" value="1"/>
</dbReference>
<dbReference type="NCBIfam" id="NF009214">
    <property type="entry name" value="PRK12563.1"/>
    <property type="match status" value="1"/>
</dbReference>
<dbReference type="PANTHER" id="PTHR43196">
    <property type="entry name" value="SULFATE ADENYLYLTRANSFERASE SUBUNIT 2"/>
    <property type="match status" value="1"/>
</dbReference>
<dbReference type="PANTHER" id="PTHR43196:SF1">
    <property type="entry name" value="SULFATE ADENYLYLTRANSFERASE SUBUNIT 2"/>
    <property type="match status" value="1"/>
</dbReference>
<dbReference type="Pfam" id="PF01507">
    <property type="entry name" value="PAPS_reduct"/>
    <property type="match status" value="1"/>
</dbReference>
<dbReference type="PIRSF" id="PIRSF002936">
    <property type="entry name" value="CysDAde_trans"/>
    <property type="match status" value="1"/>
</dbReference>
<dbReference type="SUPFAM" id="SSF52402">
    <property type="entry name" value="Adenine nucleotide alpha hydrolases-like"/>
    <property type="match status" value="1"/>
</dbReference>
<name>CYSD_ECO24</name>
<proteinExistence type="inferred from homology"/>